<evidence type="ECO:0000255" key="1">
    <source>
        <dbReference type="HAMAP-Rule" id="MF_00251"/>
    </source>
</evidence>
<evidence type="ECO:0000305" key="2"/>
<organism>
    <name type="scientific">Buchnera aphidicola subsp. Acyrthosiphon pisum (strain APS)</name>
    <name type="common">Acyrthosiphon pisum symbiotic bacterium</name>
    <dbReference type="NCBI Taxonomy" id="107806"/>
    <lineage>
        <taxon>Bacteria</taxon>
        <taxon>Pseudomonadati</taxon>
        <taxon>Pseudomonadota</taxon>
        <taxon>Gammaproteobacteria</taxon>
        <taxon>Enterobacterales</taxon>
        <taxon>Erwiniaceae</taxon>
        <taxon>Buchnera</taxon>
    </lineage>
</organism>
<sequence>MKVQASVKVLCRSCKIIKRNNVVRVICSNDPKHKQRQG</sequence>
<keyword id="KW-1185">Reference proteome</keyword>
<keyword id="KW-0687">Ribonucleoprotein</keyword>
<keyword id="KW-0689">Ribosomal protein</keyword>
<accession>P57570</accession>
<name>RL36_BUCAI</name>
<comment type="similarity">
    <text evidence="1">Belongs to the bacterial ribosomal protein bL36 family.</text>
</comment>
<feature type="chain" id="PRO_0000126161" description="Large ribosomal subunit protein bL36">
    <location>
        <begin position="1"/>
        <end position="38"/>
    </location>
</feature>
<reference key="1">
    <citation type="journal article" date="2000" name="Nature">
        <title>Genome sequence of the endocellular bacterial symbiont of aphids Buchnera sp. APS.</title>
        <authorList>
            <person name="Shigenobu S."/>
            <person name="Watanabe H."/>
            <person name="Hattori M."/>
            <person name="Sakaki Y."/>
            <person name="Ishikawa H."/>
        </authorList>
    </citation>
    <scope>NUCLEOTIDE SEQUENCE [LARGE SCALE GENOMIC DNA]</scope>
    <source>
        <strain>APS</strain>
    </source>
</reference>
<protein>
    <recommendedName>
        <fullName evidence="1">Large ribosomal subunit protein bL36</fullName>
    </recommendedName>
    <alternativeName>
        <fullName evidence="2">50S ribosomal protein L36</fullName>
    </alternativeName>
</protein>
<proteinExistence type="inferred from homology"/>
<gene>
    <name evidence="1" type="primary">rpmJ</name>
    <name type="ordered locus">BU503</name>
</gene>
<dbReference type="EMBL" id="BA000003">
    <property type="protein sequence ID" value="BAB13196.1"/>
    <property type="molecule type" value="Genomic_DNA"/>
</dbReference>
<dbReference type="RefSeq" id="NP_240310.1">
    <property type="nucleotide sequence ID" value="NC_002528.1"/>
</dbReference>
<dbReference type="RefSeq" id="WP_009874454.1">
    <property type="nucleotide sequence ID" value="NZ_AP036055.1"/>
</dbReference>
<dbReference type="SMR" id="P57570"/>
<dbReference type="STRING" id="563178.BUAP5A_496"/>
<dbReference type="EnsemblBacteria" id="BAB13196">
    <property type="protein sequence ID" value="BAB13196"/>
    <property type="gene ID" value="BAB13196"/>
</dbReference>
<dbReference type="KEGG" id="buc:BU503"/>
<dbReference type="PATRIC" id="fig|107806.10.peg.508"/>
<dbReference type="eggNOG" id="COG0257">
    <property type="taxonomic scope" value="Bacteria"/>
</dbReference>
<dbReference type="HOGENOM" id="CLU_135723_6_2_6"/>
<dbReference type="Proteomes" id="UP000001806">
    <property type="component" value="Chromosome"/>
</dbReference>
<dbReference type="GO" id="GO:0005737">
    <property type="term" value="C:cytoplasm"/>
    <property type="evidence" value="ECO:0007669"/>
    <property type="project" value="UniProtKB-ARBA"/>
</dbReference>
<dbReference type="GO" id="GO:1990904">
    <property type="term" value="C:ribonucleoprotein complex"/>
    <property type="evidence" value="ECO:0007669"/>
    <property type="project" value="UniProtKB-KW"/>
</dbReference>
<dbReference type="GO" id="GO:0005840">
    <property type="term" value="C:ribosome"/>
    <property type="evidence" value="ECO:0007669"/>
    <property type="project" value="UniProtKB-KW"/>
</dbReference>
<dbReference type="GO" id="GO:0003735">
    <property type="term" value="F:structural constituent of ribosome"/>
    <property type="evidence" value="ECO:0007669"/>
    <property type="project" value="InterPro"/>
</dbReference>
<dbReference type="GO" id="GO:0006412">
    <property type="term" value="P:translation"/>
    <property type="evidence" value="ECO:0007669"/>
    <property type="project" value="UniProtKB-UniRule"/>
</dbReference>
<dbReference type="HAMAP" id="MF_00251">
    <property type="entry name" value="Ribosomal_bL36"/>
    <property type="match status" value="1"/>
</dbReference>
<dbReference type="InterPro" id="IPR000473">
    <property type="entry name" value="Ribosomal_bL36"/>
</dbReference>
<dbReference type="InterPro" id="IPR035977">
    <property type="entry name" value="Ribosomal_bL36_sp"/>
</dbReference>
<dbReference type="NCBIfam" id="TIGR01022">
    <property type="entry name" value="rpmJ_bact"/>
    <property type="match status" value="1"/>
</dbReference>
<dbReference type="PANTHER" id="PTHR42888">
    <property type="entry name" value="50S RIBOSOMAL PROTEIN L36, CHLOROPLASTIC"/>
    <property type="match status" value="1"/>
</dbReference>
<dbReference type="PANTHER" id="PTHR42888:SF1">
    <property type="entry name" value="LARGE RIBOSOMAL SUBUNIT PROTEIN BL36C"/>
    <property type="match status" value="1"/>
</dbReference>
<dbReference type="Pfam" id="PF00444">
    <property type="entry name" value="Ribosomal_L36"/>
    <property type="match status" value="1"/>
</dbReference>
<dbReference type="SUPFAM" id="SSF57840">
    <property type="entry name" value="Ribosomal protein L36"/>
    <property type="match status" value="1"/>
</dbReference>
<dbReference type="PROSITE" id="PS00828">
    <property type="entry name" value="RIBOSOMAL_L36"/>
    <property type="match status" value="1"/>
</dbReference>